<name>DF303_ARATH</name>
<sequence length="71" mass="7897">MKSNKATFFLGLLLVYAFCIMLIESRCYTNDDCKDGQPCPVPLACLFGSCICPWKSQSKLPICQIICANLD</sequence>
<comment type="subcellular location">
    <subcellularLocation>
        <location evidence="1">Secreted</location>
    </subcellularLocation>
</comment>
<comment type="similarity">
    <text evidence="3">Belongs to the DEFL family.</text>
</comment>
<comment type="caution">
    <text evidence="3">Lacks 1 of the 4 disulfide bonds, which are conserved features of the family.</text>
</comment>
<keyword id="KW-0929">Antimicrobial</keyword>
<keyword id="KW-1015">Disulfide bond</keyword>
<keyword id="KW-0295">Fungicide</keyword>
<keyword id="KW-0611">Plant defense</keyword>
<keyword id="KW-1185">Reference proteome</keyword>
<keyword id="KW-0964">Secreted</keyword>
<keyword id="KW-0732">Signal</keyword>
<reference key="1">
    <citation type="journal article" date="2000" name="DNA Res.">
        <title>Structural analysis of Arabidopsis thaliana chromosome 5. X. Sequence features of the regions of 3,076,755 bp covered by sixty P1 and TAC clones.</title>
        <authorList>
            <person name="Sato S."/>
            <person name="Nakamura Y."/>
            <person name="Kaneko T."/>
            <person name="Katoh T."/>
            <person name="Asamizu E."/>
            <person name="Kotani H."/>
            <person name="Tabata S."/>
        </authorList>
    </citation>
    <scope>NUCLEOTIDE SEQUENCE [LARGE SCALE GENOMIC DNA]</scope>
    <source>
        <strain>cv. Columbia</strain>
    </source>
</reference>
<reference key="2">
    <citation type="journal article" date="2017" name="Plant J.">
        <title>Araport11: a complete reannotation of the Arabidopsis thaliana reference genome.</title>
        <authorList>
            <person name="Cheng C.Y."/>
            <person name="Krishnakumar V."/>
            <person name="Chan A.P."/>
            <person name="Thibaud-Nissen F."/>
            <person name="Schobel S."/>
            <person name="Town C.D."/>
        </authorList>
    </citation>
    <scope>GENOME REANNOTATION</scope>
    <source>
        <strain>cv. Columbia</strain>
    </source>
</reference>
<reference key="3">
    <citation type="journal article" date="2005" name="Plant Physiol.">
        <title>Genome organization of more than 300 defensin-like genes in Arabidopsis.</title>
        <authorList>
            <person name="Silverstein K.A.T."/>
            <person name="Graham M.A."/>
            <person name="Paape T.D."/>
            <person name="VandenBosch K.A."/>
        </authorList>
    </citation>
    <scope>GENE FAMILY</scope>
</reference>
<evidence type="ECO:0000250" key="1"/>
<evidence type="ECO:0000255" key="2"/>
<evidence type="ECO:0000305" key="3"/>
<organism>
    <name type="scientific">Arabidopsis thaliana</name>
    <name type="common">Mouse-ear cress</name>
    <dbReference type="NCBI Taxonomy" id="3702"/>
    <lineage>
        <taxon>Eukaryota</taxon>
        <taxon>Viridiplantae</taxon>
        <taxon>Streptophyta</taxon>
        <taxon>Embryophyta</taxon>
        <taxon>Tracheophyta</taxon>
        <taxon>Spermatophyta</taxon>
        <taxon>Magnoliopsida</taxon>
        <taxon>eudicotyledons</taxon>
        <taxon>Gunneridae</taxon>
        <taxon>Pentapetalae</taxon>
        <taxon>rosids</taxon>
        <taxon>malvids</taxon>
        <taxon>Brassicales</taxon>
        <taxon>Brassicaceae</taxon>
        <taxon>Camelineae</taxon>
        <taxon>Arabidopsis</taxon>
    </lineage>
</organism>
<accession>Q2V311</accession>
<gene>
    <name type="ordered locus">At5g46873</name>
    <name type="ORF">MSD23</name>
</gene>
<protein>
    <recommendedName>
        <fullName>Putative defensin-like protein 303</fullName>
    </recommendedName>
</protein>
<proteinExistence type="inferred from homology"/>
<feature type="signal peptide" evidence="2">
    <location>
        <begin position="1"/>
        <end position="25"/>
    </location>
</feature>
<feature type="chain" id="PRO_0000379760" description="Putative defensin-like protein 303">
    <location>
        <begin position="26"/>
        <end position="71"/>
    </location>
</feature>
<feature type="disulfide bond" evidence="1">
    <location>
        <begin position="27"/>
        <end position="45"/>
    </location>
</feature>
<feature type="disulfide bond" evidence="1">
    <location>
        <begin position="33"/>
        <end position="50"/>
    </location>
</feature>
<feature type="disulfide bond" evidence="1">
    <location>
        <begin position="39"/>
        <end position="52"/>
    </location>
</feature>
<dbReference type="EMBL" id="AB022221">
    <property type="status" value="NOT_ANNOTATED_CDS"/>
    <property type="molecule type" value="Genomic_DNA"/>
</dbReference>
<dbReference type="EMBL" id="CP002688">
    <property type="protein sequence ID" value="AED95440.1"/>
    <property type="molecule type" value="Genomic_DNA"/>
</dbReference>
<dbReference type="RefSeq" id="NP_001032021.1">
    <property type="nucleotide sequence ID" value="NM_001036944.2"/>
</dbReference>
<dbReference type="PaxDb" id="3702-AT5G46873.1"/>
<dbReference type="EnsemblPlants" id="AT5G46873.1">
    <property type="protein sequence ID" value="AT5G46873.1"/>
    <property type="gene ID" value="AT5G46873"/>
</dbReference>
<dbReference type="GeneID" id="3771454"/>
<dbReference type="Gramene" id="AT5G46873.1">
    <property type="protein sequence ID" value="AT5G46873.1"/>
    <property type="gene ID" value="AT5G46873"/>
</dbReference>
<dbReference type="KEGG" id="ath:AT5G46873"/>
<dbReference type="Araport" id="AT5G46873"/>
<dbReference type="TAIR" id="AT5G46873"/>
<dbReference type="HOGENOM" id="CLU_162923_0_0_1"/>
<dbReference type="InParanoid" id="Q2V311"/>
<dbReference type="OMA" id="ICQIICA"/>
<dbReference type="PhylomeDB" id="Q2V311"/>
<dbReference type="PRO" id="PR:Q2V311"/>
<dbReference type="Proteomes" id="UP000006548">
    <property type="component" value="Chromosome 5"/>
</dbReference>
<dbReference type="ExpressionAtlas" id="Q2V311">
    <property type="expression patterns" value="baseline"/>
</dbReference>
<dbReference type="GO" id="GO:0005576">
    <property type="term" value="C:extracellular region"/>
    <property type="evidence" value="ECO:0007669"/>
    <property type="project" value="UniProtKB-SubCell"/>
</dbReference>
<dbReference type="GO" id="GO:0050832">
    <property type="term" value="P:defense response to fungus"/>
    <property type="evidence" value="ECO:0007669"/>
    <property type="project" value="UniProtKB-KW"/>
</dbReference>
<dbReference type="GO" id="GO:0031640">
    <property type="term" value="P:killing of cells of another organism"/>
    <property type="evidence" value="ECO:0007669"/>
    <property type="project" value="UniProtKB-KW"/>
</dbReference>